<reference key="1">
    <citation type="journal article" date="2013" name="BMC Genomics">
        <title>Genomics-driven discovery of the pneumocandin biosynthetic gene cluster in the fungus Glarea lozoyensis.</title>
        <authorList>
            <person name="Chen L."/>
            <person name="Yue Q."/>
            <person name="Zhang X."/>
            <person name="Xiang M."/>
            <person name="Wang C."/>
            <person name="Li S."/>
            <person name="Che Y."/>
            <person name="Ortiz-Lopez F.J."/>
            <person name="Bills G.F."/>
            <person name="Liu X."/>
            <person name="An Z."/>
        </authorList>
    </citation>
    <scope>NUCLEOTIDE SEQUENCE [LARGE SCALE GENOMIC DNA]</scope>
    <scope>IDENTIFICATION</scope>
    <scope>FUNCTION</scope>
    <scope>DISRUPTION PHENOTYPE</scope>
    <scope>PATHWAY</scope>
    <source>
        <strain>ATCC 20868 / MF5171</strain>
    </source>
</reference>
<reference key="2">
    <citation type="journal article" date="2014" name="ChemBioChem">
        <title>Pneumocandin biosynthesis: involvement of a trans-selective proline hydroxylase.</title>
        <authorList>
            <person name="Houwaart S."/>
            <person name="Youssar L."/>
            <person name="Huettel W."/>
        </authorList>
    </citation>
    <scope>FUNCTION</scope>
</reference>
<reference key="3">
    <citation type="journal article" date="2015" name="ACS Chem. Biol.">
        <title>Genetic manipulation of the pneumocandin biosynthetic pathway for generation of analogues and evaluation of their antifungal activity.</title>
        <authorList>
            <person name="Li Y."/>
            <person name="Chen L."/>
            <person name="Yue Q."/>
            <person name="Liu X."/>
            <person name="An Z."/>
            <person name="Bills G.F."/>
        </authorList>
    </citation>
    <scope>FUNCTION</scope>
    <scope>DOMAIN</scope>
    <scope>PATHWAY</scope>
    <scope>BIOTECHNOLOGY</scope>
</reference>
<reference key="4">
    <citation type="journal article" date="2015" name="Appl. Environ. Microbiol.">
        <title>Engineering of Glarea lozoyensis for exclusive production of the pneumocandin B0 precursor of the antifungal drug caspofungin acetate.</title>
        <authorList>
            <person name="Chen L."/>
            <person name="Yue Q."/>
            <person name="Li Y."/>
            <person name="Niu X."/>
            <person name="Xiang M."/>
            <person name="Wang W."/>
            <person name="Bills G.F."/>
            <person name="Liu X."/>
            <person name="An Z."/>
        </authorList>
    </citation>
    <scope>FUNCTION</scope>
    <scope>BIOTECHNOLOGY</scope>
</reference>
<reference key="5">
    <citation type="journal article" date="2016" name="ACS Chem. Biol.">
        <title>Engineering of new pneumocandin side-chain analogues from Glarea lozoyensis by mutasynthesis and evaluation of their antifungal activity.</title>
        <authorList>
            <person name="Chen L."/>
            <person name="Li Y."/>
            <person name="Yue Q."/>
            <person name="Loksztejn A."/>
            <person name="Yokoyama K."/>
            <person name="Felix E.A."/>
            <person name="Liu X."/>
            <person name="Zhang N."/>
            <person name="An Z."/>
            <person name="Bills G.F."/>
        </authorList>
    </citation>
    <scope>FUNCTION</scope>
    <scope>DISRUPTION PHENOTYPE</scope>
    <scope>PATHWAY</scope>
    <scope>BIOTECHNOLOGY</scope>
</reference>
<reference key="6">
    <citation type="journal article" date="2018" name="Appl. Environ. Microbiol.">
        <title>Cryptic production of trans-3-hydroxyproline in echinocandin B biosynthesis.</title>
        <authorList>
            <person name="Mattay J."/>
            <person name="Houwaart S."/>
            <person name="Huettel W."/>
        </authorList>
    </citation>
    <scope>FUNCTION</scope>
</reference>
<reference key="7">
    <citation type="journal article" date="2017" name="Z. Naturforsch. C">
        <title>Structural diversity in echinocandin biosynthesis: the impact of oxidation steps and approaches toward an evolutionary explanation.</title>
        <authorList>
            <person name="Huettel W."/>
        </authorList>
    </citation>
    <scope>REVIEW</scope>
</reference>
<gene>
    <name evidence="13" type="primary">gloL</name>
    <name evidence="12" type="synonym">GLPKS4</name>
    <name type="ORF">GLAREA_10034</name>
</gene>
<proteinExistence type="evidence at protein level"/>
<feature type="chain" id="PRO_0000444491" description="Highly reducing polyketide synthase gloL">
    <location>
        <begin position="1"/>
        <end position="2531"/>
    </location>
</feature>
<feature type="domain" description="Ketosynthase family 3 (KS3)" evidence="3 18">
    <location>
        <begin position="15"/>
        <end position="435"/>
    </location>
</feature>
<feature type="domain" description="PKS/mFAS DH" evidence="4">
    <location>
        <begin position="971"/>
        <end position="1254"/>
    </location>
</feature>
<feature type="domain" description="Carrier" evidence="2 18">
    <location>
        <begin position="2413"/>
        <end position="2505"/>
    </location>
</feature>
<feature type="region of interest" description="Disordered" evidence="5">
    <location>
        <begin position="449"/>
        <end position="525"/>
    </location>
</feature>
<feature type="region of interest" description="Malonyl-CoA:ACP transacylase (MAT) domain" evidence="1 18">
    <location>
        <begin position="602"/>
        <end position="909"/>
    </location>
</feature>
<feature type="region of interest" description="Dehydratase (DH) domain" evidence="1 18">
    <location>
        <begin position="971"/>
        <end position="1251"/>
    </location>
</feature>
<feature type="region of interest" description="N-terminal hotdog fold" evidence="4">
    <location>
        <begin position="971"/>
        <end position="1099"/>
    </location>
</feature>
<feature type="region of interest" description="C-terminal hotdog fold" evidence="4">
    <location>
        <begin position="1109"/>
        <end position="1254"/>
    </location>
</feature>
<feature type="region of interest" description="Methyltransferase (CMet) domain" evidence="1 18">
    <location>
        <begin position="1419"/>
        <end position="1597"/>
    </location>
</feature>
<feature type="region of interest" description="Enoyl reductase (ER) (ER) domain" evidence="1 18">
    <location>
        <begin position="1806"/>
        <end position="2114"/>
    </location>
</feature>
<feature type="region of interest" description="Ketoreductase (KR) domain" evidence="1 18">
    <location>
        <begin position="2139"/>
        <end position="2312"/>
    </location>
</feature>
<feature type="compositionally biased region" description="Low complexity" evidence="5">
    <location>
        <begin position="453"/>
        <end position="503"/>
    </location>
</feature>
<feature type="compositionally biased region" description="Polar residues" evidence="5">
    <location>
        <begin position="505"/>
        <end position="521"/>
    </location>
</feature>
<feature type="active site" description="For beta-ketoacyl synthase activity" evidence="3">
    <location>
        <position position="187"/>
    </location>
</feature>
<feature type="active site" description="For beta-ketoacyl synthase activity" evidence="3">
    <location>
        <position position="322"/>
    </location>
</feature>
<feature type="active site" description="For beta-ketoacyl synthase activity" evidence="3">
    <location>
        <position position="358"/>
    </location>
</feature>
<feature type="active site" description="Proton acceptor; for dehydratase activity" evidence="4">
    <location>
        <position position="1003"/>
    </location>
</feature>
<feature type="active site" description="Proton donor; for dehydratase activity" evidence="4">
    <location>
        <position position="1169"/>
    </location>
</feature>
<feature type="modified residue" description="O-(pantetheine 4'-phosphoryl)serine" evidence="2">
    <location>
        <position position="2464"/>
    </location>
</feature>
<comment type="function">
    <text evidence="6 7 8 9 10 11 15">Highly reducing polyketide synthase; part of the gene cluster that mediates the biosynthesis of pneumocandins, lipohexapeptides of the echinocandin family that prevent fungal cell wall formation by non-competitive inhibition of beta-1,3-glucan synthase (PubMed:23688303, PubMed:27705900). The 10,12-dimethylmyristoyl side chain is synthesized by the reducing polyketide synthase gloL/GLPKS4 (PubMed:27494047). The thioesterase gloN/GLHYD exclusively interacts with gloL/GLPKS4 to maintain turnover of the polyketide side chain (PubMed:27494047). The 10R,12S-dimethylmyristic acid is then transferred to the first thiolation domain of the nonribosomal peptide synthetase gloA/GLNRPS4 by the acyl-AMP ligase gloD/GLligase, followed by its acylation to L-ornithine to trigger elongation of the cyclic hexapeptide (PubMed:27494047). L-ornithine, 4R-hydroxyl-L-proline (generated from L-proline by the dioxygenase gloF/GLOXY2), 3S-hydroxyl-L-homotyrosine (generated by gloG/GLHtyB, gloH/GLHtyA, gloI/GLHtyC, gloJ/GLHtyD and hydroxylated at C-3 by the dioxygenase gloM/GLOXY1), 3R-hydroxyl-L-glutamine (generated from L-glutamine probably by the dioxygenase gloE/GLOXY3) and 3S-hydroxyl-L-proline (generated from L-proline by the dioxygenase gloF/GLOXY2 to yield pneumocandin B0), or 3S-hydroxyl-4S-methyl-L-proline (generated from L-leucine by the dioxygenase gloC/GLOXY4 to yield pneumocandin A0) are sequentially added to the growing chain (PubMed:25270390, PubMed:25527531, PubMed:25879325). The last C domain of gloA/GLNRPS4 is proposed to be responsible for cyclization by condensation to form the peptide bond between L-ornithine and 3S-hydroxyl-4S-methyl-L-proline (for pneumocandin A0) or 3S-hydroxyl-L-proline (for pneumocandin B0). Finally, the subsequent C-4 hydroxylation of 3S-hydroxyl-L-homotyrosine and L-ornithine dihydroxylation at C-4 and C-5 are performed by the cytochrome P450 monooxygenases gloP/GLP450-1 and gloO/GLP450-2, respectively (PubMed:25879325).</text>
</comment>
<comment type="pathway">
    <text evidence="6 10 18">Mycotoxin biosynthesis.</text>
</comment>
<comment type="disruption phenotype">
    <text evidence="6 10">Blocks the production of the two major pneumocandins, A0 and B0 (PubMed:23688303). Leads to the formation of a pneumocandin A0 derivative with a myristic acid side chain as the main pneumocandin product (PubMed:27494047). Also produces tiny amounts of pneumocandin A0 derivatives with a pentadecanoic or palmitic acid side chain (PubMed:27494047).</text>
</comment>
<comment type="biotechnology">
    <text evidence="8 9 10">Pneumocandin B0 is the starting molecule for the first semisynthetic echinocandin antifungal drug, caspofungin acetate (PubMed:25527531). Pneumocandin B0 is a minor fermentation product, and its industrial production was achieved by a combination of extensive mutation and medium optimization (PubMed:25527531). Inactivation of three of gloP/GLP450-1, gloO/GLP450-2, and gloM/GLOXY1 generates 13 different pneumocandin analogs that lack one, two, three, or four hydroxyl groups on 4R,5R-dihydroxy-ornithine and 3S,4S-dihydroxy-homotyrosine of the parent hexapeptide (PubMed:25879325). All of these cyclic lipopeptides show potent antifungal activities, and two new metabolites pneumocandins F and G are more potent in vitro against Candida species and Aspergillus fumigatus than the principal fermentation products, pneumocandins A0 and B0 (PubMed:25879325). Moreover, feeding alternative side chain precursors yields acrophiarin and 4 additional pneumocandin congeners with straight C14, C15, and C16 side chains. One of those compounds, pneumocandin I, has elevated antifungal activity and similar hemolytic activity compared to pneumocandin B0, the starting molecule for caspofungin, demonstrating the potential for using gloD/GLligase for future engineering of new echinocandin analogs (PubMed:27494047).</text>
</comment>
<keyword id="KW-0012">Acyltransferase</keyword>
<keyword id="KW-0489">Methyltransferase</keyword>
<keyword id="KW-0511">Multifunctional enzyme</keyword>
<keyword id="KW-0521">NADP</keyword>
<keyword id="KW-0560">Oxidoreductase</keyword>
<keyword id="KW-0596">Phosphopantetheine</keyword>
<keyword id="KW-0597">Phosphoprotein</keyword>
<keyword id="KW-1185">Reference proteome</keyword>
<keyword id="KW-0808">Transferase</keyword>
<protein>
    <recommendedName>
        <fullName evidence="12">Highly reducing polyketide synthase gloL</fullName>
        <shortName evidence="16">HR-PKS gloL</shortName>
        <ecNumber evidence="17">2.3.1.-</ecNumber>
    </recommendedName>
    <alternativeName>
        <fullName evidence="14">Pneumocandin acyl side chain synthase</fullName>
    </alternativeName>
    <alternativeName>
        <fullName evidence="13">Pneumocandin biosynthesis cluster protein L</fullName>
    </alternativeName>
</protein>
<evidence type="ECO:0000255" key="1"/>
<evidence type="ECO:0000255" key="2">
    <source>
        <dbReference type="PROSITE-ProRule" id="PRU00258"/>
    </source>
</evidence>
<evidence type="ECO:0000255" key="3">
    <source>
        <dbReference type="PROSITE-ProRule" id="PRU01348"/>
    </source>
</evidence>
<evidence type="ECO:0000255" key="4">
    <source>
        <dbReference type="PROSITE-ProRule" id="PRU01363"/>
    </source>
</evidence>
<evidence type="ECO:0000256" key="5">
    <source>
        <dbReference type="SAM" id="MobiDB-lite"/>
    </source>
</evidence>
<evidence type="ECO:0000269" key="6">
    <source>
    </source>
</evidence>
<evidence type="ECO:0000269" key="7">
    <source>
    </source>
</evidence>
<evidence type="ECO:0000269" key="8">
    <source>
    </source>
</evidence>
<evidence type="ECO:0000269" key="9">
    <source>
    </source>
</evidence>
<evidence type="ECO:0000269" key="10">
    <source>
    </source>
</evidence>
<evidence type="ECO:0000269" key="11">
    <source>
    </source>
</evidence>
<evidence type="ECO:0000303" key="12">
    <source>
    </source>
</evidence>
<evidence type="ECO:0000303" key="13">
    <source>
    </source>
</evidence>
<evidence type="ECO:0000303" key="14">
    <source>
    </source>
</evidence>
<evidence type="ECO:0000303" key="15">
    <source>
    </source>
</evidence>
<evidence type="ECO:0000305" key="16"/>
<evidence type="ECO:0000305" key="17">
    <source>
    </source>
</evidence>
<evidence type="ECO:0000305" key="18">
    <source>
    </source>
</evidence>
<organism>
    <name type="scientific">Glarea lozoyensis (strain ATCC 20868 / MF5171)</name>
    <dbReference type="NCBI Taxonomy" id="1116229"/>
    <lineage>
        <taxon>Eukaryota</taxon>
        <taxon>Fungi</taxon>
        <taxon>Dikarya</taxon>
        <taxon>Ascomycota</taxon>
        <taxon>Pezizomycotina</taxon>
        <taxon>Leotiomycetes</taxon>
        <taxon>Helotiales</taxon>
        <taxon>Helotiaceae</taxon>
        <taxon>Glarea</taxon>
    </lineage>
</organism>
<name>GLOL_GLAL2</name>
<accession>S3D9F1</accession>
<sequence>MGDISGSVDPSNMAYEPLAIVGMGMRLPGGIHTAEDFWNLLVEKRSSRCKVPSDRFNIEAFYSPSGRVGTVKMEHGHFLGPTDDLQHFDASFFSMSKKEVEILDPQQRMLLEVVYECMQNAGQSNWRGGNIGCYVGVWGEDWVDIHAKDSQDAGMYRISGGQDFAISNRVSYEYDLKGPSFTIKSGCSSSMIALHEAARAIQAGDCDGAIIAGTNLIISPTMSIAMTEQGVLSPDGACKSFDESADGYARGEAINAIYIKRLSDAIRDGDNIRSVIRATASNCDGKTPGITLPSSESHEAMMRRAYKEACLDPTQTAFVEAHGTGTKIGDPLEATAIARVFSSEKGVYIGSVKPNVGHSEGASGVTSIMKAVLALENRTIPPNINFSTPNPQIPFEASNMKVAVEPIPWPKVQAERASVNSFGIGGANAHVILDSPASMGISSTKRNTTNGLSVNGHSINGNSVNGHSVNGHSTNGHSINGNSVNGHSVNGNSVNGHSTNGHSINGHSANGNSINGHSVNGHSKPRPALLVLSATNTESLRANVVKHQQYIETNPEKLVNIEYNLCNRREHLSNRAFCVTDGLSTLQFSPLTKPKKTPTLVMVFTGQGAQWAEMGKELMADFPSFSQDIDLMNNTLSKLDHPPSWNIKEELLKHESVSCLSKAEFAQPLVTAIQVALVNLLRQFGVKPAAVVGHSSGEIAAAYAANAITANEAIIIAYYRGQVTKGFSRRGGMAAVGLGREDVMSFLNPGVSIACENSSSSVTLSGDEDALNATCEIIKTALPDVFLRPLKVEMAYHSHHMKELGEAYEALLRPHLKSTTPVVPFFSSVSGKVVSKSGTLDAAYWRSNLENPVLFNSAIKLILDTLAQDHLFLEIGPHSALAGPIRQILKANSRKNDTYVTALERGKDCGESILKMIGELYLQHISINFKQVAPNGTVLTDLPLYQWCHDQEYWKESRVSKQWRLRKYPNHEILGSRTVEGNELQPEWRNVLHLDNVPWLRDHQIINDVVFPCAGYLSMACEAIRQISASEDFTFRNIVIQTALVMSDSKSVEMITSLRPVRLTNTLNSVWWDFSISSYNGSLWIKHCGGQIRSGTDNPKFKLPRRIEDHPRSVPSPYPAMKKVGLNYGPTFQGLERLSALPKKMTASATLSKSELSESHYAIHPATIDHCLQLFIVSTCEGTLRNINKLCVPTSIDQLYICGGKSTSGIKAEACGAQTSTGTISGDVVAISGDAIILSLIGGQFSPIEEDSSDEDLDTVAGARLDWKPDLDFVQIDNLIRPRQQSTAATKTLEKFTLLSMIDIGRRISGLVTKSEYLEKFRSWINAQVERASEDRYNLVEDAQALTVLNAGERQMLIAELSKEISNSEVATSGELISRVVKNCEDIMVGKIDGIEVLLPENGLTHFYDSLEHRTDCIDFFTAAGHSKPNLRVLEIGSGTGGTSAVVLKGLTSTAQRMYSTYTYTDISSGFFVEAQERFKDYHGLEYKVLDISKDPTEQGFQEGSYDLIIAANVLHATPSLNTTLGHARKLLAEDGRLFLQELSPQVQFANLIMGVLPGWWLGEADGRANEPYISPERWAVELRKAGFSGCDATVYDAEQPYQFNANIISRPAKVDRIARRITLLYEPNLNIQQIKFSLENKGYSVDLCTIQEEPPAGQDIVSLLELETPMFEKISGTDLALFQRLVKNLGTNHLLWVTRSAQIESYDPRFGMVLGLARTLRSELSLSIATLEIDTVDEVAYNAITNVFDKLKNSSSVSDMNPDYEFVLSKGVVNIGRYHPVSVEQELAVSASQSQAVKLEIGRFGLLQTLRWVPDLQNKVGHDQVIVEPRCAGLNFKDVLVSMGIVSGDGLGLEGSGTVVGVGSEVTDFQVGDRVLYIDQNCFSTRTAIPALRCAKIPSTLSWEEAATMPCVYATVIHSLLNLGRIQKGQSVLIHSACGGIGLAAIQICQNIVGAQIYVTVGNEEKVHYLMDTFGISRDHIFNSRDTSFLPAIKAATNGRGVDVVLNSLSGELLHASWECVAEYGSMVEIGKRDFIGKAQLNMDLFESNRSFFGVDLAKFDAARCQLLLVQMMEFYEKGLIKPIAPMKVFEGAKVEDSFRYMQKGSHIGKIVVTIPEQNTDLPLASIVPKLKLNPDAGYLLVGGLGGLGRAVSTWMVERGARHLIFLSRSAGKSDQDQSFFRELESQDCTVQAFTGSVATFQDVQNAVQRASKPIKGVFQMSMVLNDKPFLEMSCSDWETSVLPKVEGTWHLHHALPKDLDFFVATSSLSGSFGNAGQANYAAANTFLDAFVQYRHSLGLPASVVDIGVMGDIGYVSRNAAIQESLRGAGTYFLQEQDFLDSLNWAVAKSAVKPSLPGQNQLLIGVRSSKSLSDPSNRVSFKRDARMGAYLNTGSSTSANTTNATDQLKSFMSSVETDSSILNVPASLDLVTNEIGVRIYTFMLQPIEDLDVSQTLAALGVDSLVTIEIRNWMKRSFGGLEFSTLEILNAGTIEALGLLTIEGLKRKYEMKDGEAKFSEREDTYLLMKAP</sequence>
<dbReference type="EC" id="2.3.1.-" evidence="17"/>
<dbReference type="EMBL" id="KE145356">
    <property type="protein sequence ID" value="EPE34340.1"/>
    <property type="molecule type" value="Genomic_DNA"/>
</dbReference>
<dbReference type="RefSeq" id="XP_008078275.1">
    <property type="nucleotide sequence ID" value="XM_008080084.1"/>
</dbReference>
<dbReference type="SMR" id="S3D9F1"/>
<dbReference type="STRING" id="1116229.S3D9F1"/>
<dbReference type="GeneID" id="19469081"/>
<dbReference type="KEGG" id="glz:GLAREA_10034"/>
<dbReference type="eggNOG" id="KOG1202">
    <property type="taxonomic scope" value="Eukaryota"/>
</dbReference>
<dbReference type="HOGENOM" id="CLU_000022_31_1_1"/>
<dbReference type="OMA" id="NYGPEFQ"/>
<dbReference type="OrthoDB" id="3565206at2759"/>
<dbReference type="Proteomes" id="UP000016922">
    <property type="component" value="Unassembled WGS sequence"/>
</dbReference>
<dbReference type="GO" id="GO:0004315">
    <property type="term" value="F:3-oxoacyl-[acyl-carrier-protein] synthase activity"/>
    <property type="evidence" value="ECO:0007669"/>
    <property type="project" value="InterPro"/>
</dbReference>
<dbReference type="GO" id="GO:0004312">
    <property type="term" value="F:fatty acid synthase activity"/>
    <property type="evidence" value="ECO:0007669"/>
    <property type="project" value="TreeGrafter"/>
</dbReference>
<dbReference type="GO" id="GO:0008168">
    <property type="term" value="F:methyltransferase activity"/>
    <property type="evidence" value="ECO:0007669"/>
    <property type="project" value="UniProtKB-KW"/>
</dbReference>
<dbReference type="GO" id="GO:0016491">
    <property type="term" value="F:oxidoreductase activity"/>
    <property type="evidence" value="ECO:0007669"/>
    <property type="project" value="UniProtKB-KW"/>
</dbReference>
<dbReference type="GO" id="GO:0031177">
    <property type="term" value="F:phosphopantetheine binding"/>
    <property type="evidence" value="ECO:0007669"/>
    <property type="project" value="InterPro"/>
</dbReference>
<dbReference type="GO" id="GO:0006633">
    <property type="term" value="P:fatty acid biosynthetic process"/>
    <property type="evidence" value="ECO:0007669"/>
    <property type="project" value="InterPro"/>
</dbReference>
<dbReference type="GO" id="GO:0032259">
    <property type="term" value="P:methylation"/>
    <property type="evidence" value="ECO:0007669"/>
    <property type="project" value="UniProtKB-KW"/>
</dbReference>
<dbReference type="GO" id="GO:0044550">
    <property type="term" value="P:secondary metabolite biosynthetic process"/>
    <property type="evidence" value="ECO:0007669"/>
    <property type="project" value="UniProtKB-ARBA"/>
</dbReference>
<dbReference type="CDD" id="cd02440">
    <property type="entry name" value="AdoMet_MTases"/>
    <property type="match status" value="1"/>
</dbReference>
<dbReference type="CDD" id="cd05195">
    <property type="entry name" value="enoyl_red"/>
    <property type="match status" value="1"/>
</dbReference>
<dbReference type="CDD" id="cd00833">
    <property type="entry name" value="PKS"/>
    <property type="match status" value="1"/>
</dbReference>
<dbReference type="FunFam" id="3.40.50.720:FF:000209">
    <property type="entry name" value="Polyketide synthase Pks12"/>
    <property type="match status" value="1"/>
</dbReference>
<dbReference type="Gene3D" id="3.30.70.3290">
    <property type="match status" value="1"/>
</dbReference>
<dbReference type="Gene3D" id="3.40.47.10">
    <property type="match status" value="1"/>
</dbReference>
<dbReference type="Gene3D" id="1.10.1200.10">
    <property type="entry name" value="ACP-like"/>
    <property type="match status" value="1"/>
</dbReference>
<dbReference type="Gene3D" id="3.40.366.10">
    <property type="entry name" value="Malonyl-Coenzyme A Acyl Carrier Protein, domain 2"/>
    <property type="match status" value="1"/>
</dbReference>
<dbReference type="Gene3D" id="3.90.180.10">
    <property type="entry name" value="Medium-chain alcohol dehydrogenases, catalytic domain"/>
    <property type="match status" value="1"/>
</dbReference>
<dbReference type="Gene3D" id="3.40.50.720">
    <property type="entry name" value="NAD(P)-binding Rossmann-like Domain"/>
    <property type="match status" value="2"/>
</dbReference>
<dbReference type="Gene3D" id="3.10.129.110">
    <property type="entry name" value="Polyketide synthase dehydratase"/>
    <property type="match status" value="1"/>
</dbReference>
<dbReference type="Gene3D" id="3.40.50.150">
    <property type="entry name" value="Vaccinia Virus protein VP39"/>
    <property type="match status" value="1"/>
</dbReference>
<dbReference type="InterPro" id="IPR001227">
    <property type="entry name" value="Ac_transferase_dom_sf"/>
</dbReference>
<dbReference type="InterPro" id="IPR036736">
    <property type="entry name" value="ACP-like_sf"/>
</dbReference>
<dbReference type="InterPro" id="IPR014043">
    <property type="entry name" value="Acyl_transferase_dom"/>
</dbReference>
<dbReference type="InterPro" id="IPR016035">
    <property type="entry name" value="Acyl_Trfase/lysoPLipase"/>
</dbReference>
<dbReference type="InterPro" id="IPR013154">
    <property type="entry name" value="ADH-like_N"/>
</dbReference>
<dbReference type="InterPro" id="IPR011032">
    <property type="entry name" value="GroES-like_sf"/>
</dbReference>
<dbReference type="InterPro" id="IPR018201">
    <property type="entry name" value="Ketoacyl_synth_AS"/>
</dbReference>
<dbReference type="InterPro" id="IPR014031">
    <property type="entry name" value="Ketoacyl_synth_C"/>
</dbReference>
<dbReference type="InterPro" id="IPR014030">
    <property type="entry name" value="Ketoacyl_synth_N"/>
</dbReference>
<dbReference type="InterPro" id="IPR016036">
    <property type="entry name" value="Malonyl_transacylase_ACP-bd"/>
</dbReference>
<dbReference type="InterPro" id="IPR013217">
    <property type="entry name" value="Methyltransf_12"/>
</dbReference>
<dbReference type="InterPro" id="IPR036291">
    <property type="entry name" value="NAD(P)-bd_dom_sf"/>
</dbReference>
<dbReference type="InterPro" id="IPR032821">
    <property type="entry name" value="PKS_assoc"/>
</dbReference>
<dbReference type="InterPro" id="IPR020841">
    <property type="entry name" value="PKS_Beta-ketoAc_synthase_dom"/>
</dbReference>
<dbReference type="InterPro" id="IPR042104">
    <property type="entry name" value="PKS_dehydratase_sf"/>
</dbReference>
<dbReference type="InterPro" id="IPR020807">
    <property type="entry name" value="PKS_DH"/>
</dbReference>
<dbReference type="InterPro" id="IPR049551">
    <property type="entry name" value="PKS_DH_C"/>
</dbReference>
<dbReference type="InterPro" id="IPR049552">
    <property type="entry name" value="PKS_DH_N"/>
</dbReference>
<dbReference type="InterPro" id="IPR020843">
    <property type="entry name" value="PKS_ER"/>
</dbReference>
<dbReference type="InterPro" id="IPR013968">
    <property type="entry name" value="PKS_KR"/>
</dbReference>
<dbReference type="InterPro" id="IPR049900">
    <property type="entry name" value="PKS_mFAS_DH"/>
</dbReference>
<dbReference type="InterPro" id="IPR050091">
    <property type="entry name" value="PKS_NRPS_Biosynth_Enz"/>
</dbReference>
<dbReference type="InterPro" id="IPR020806">
    <property type="entry name" value="PKS_PP-bd"/>
</dbReference>
<dbReference type="InterPro" id="IPR009081">
    <property type="entry name" value="PP-bd_ACP"/>
</dbReference>
<dbReference type="InterPro" id="IPR006162">
    <property type="entry name" value="Ppantetheine_attach_site"/>
</dbReference>
<dbReference type="InterPro" id="IPR029063">
    <property type="entry name" value="SAM-dependent_MTases_sf"/>
</dbReference>
<dbReference type="InterPro" id="IPR016039">
    <property type="entry name" value="Thiolase-like"/>
</dbReference>
<dbReference type="PANTHER" id="PTHR43775">
    <property type="entry name" value="FATTY ACID SYNTHASE"/>
    <property type="match status" value="1"/>
</dbReference>
<dbReference type="PANTHER" id="PTHR43775:SF49">
    <property type="entry name" value="SYNTHASE, PUTATIVE (JCVI)-RELATED"/>
    <property type="match status" value="1"/>
</dbReference>
<dbReference type="Pfam" id="PF00698">
    <property type="entry name" value="Acyl_transf_1"/>
    <property type="match status" value="1"/>
</dbReference>
<dbReference type="Pfam" id="PF08240">
    <property type="entry name" value="ADH_N"/>
    <property type="match status" value="1"/>
</dbReference>
<dbReference type="Pfam" id="PF13602">
    <property type="entry name" value="ADH_zinc_N_2"/>
    <property type="match status" value="1"/>
</dbReference>
<dbReference type="Pfam" id="PF22621">
    <property type="entry name" value="CurL-like_PKS_C"/>
    <property type="match status" value="1"/>
</dbReference>
<dbReference type="Pfam" id="PF16197">
    <property type="entry name" value="KAsynt_C_assoc"/>
    <property type="match status" value="1"/>
</dbReference>
<dbReference type="Pfam" id="PF00109">
    <property type="entry name" value="ketoacyl-synt"/>
    <property type="match status" value="1"/>
</dbReference>
<dbReference type="Pfam" id="PF02801">
    <property type="entry name" value="Ketoacyl-synt_C"/>
    <property type="match status" value="1"/>
</dbReference>
<dbReference type="Pfam" id="PF08659">
    <property type="entry name" value="KR"/>
    <property type="match status" value="1"/>
</dbReference>
<dbReference type="Pfam" id="PF08242">
    <property type="entry name" value="Methyltransf_12"/>
    <property type="match status" value="1"/>
</dbReference>
<dbReference type="Pfam" id="PF21089">
    <property type="entry name" value="PKS_DH_N"/>
    <property type="match status" value="1"/>
</dbReference>
<dbReference type="Pfam" id="PF00550">
    <property type="entry name" value="PP-binding"/>
    <property type="match status" value="1"/>
</dbReference>
<dbReference type="Pfam" id="PF14765">
    <property type="entry name" value="PS-DH"/>
    <property type="match status" value="1"/>
</dbReference>
<dbReference type="SMART" id="SM00827">
    <property type="entry name" value="PKS_AT"/>
    <property type="match status" value="1"/>
</dbReference>
<dbReference type="SMART" id="SM00826">
    <property type="entry name" value="PKS_DH"/>
    <property type="match status" value="1"/>
</dbReference>
<dbReference type="SMART" id="SM00829">
    <property type="entry name" value="PKS_ER"/>
    <property type="match status" value="1"/>
</dbReference>
<dbReference type="SMART" id="SM00822">
    <property type="entry name" value="PKS_KR"/>
    <property type="match status" value="1"/>
</dbReference>
<dbReference type="SMART" id="SM00825">
    <property type="entry name" value="PKS_KS"/>
    <property type="match status" value="1"/>
</dbReference>
<dbReference type="SMART" id="SM00823">
    <property type="entry name" value="PKS_PP"/>
    <property type="match status" value="1"/>
</dbReference>
<dbReference type="SUPFAM" id="SSF47336">
    <property type="entry name" value="ACP-like"/>
    <property type="match status" value="1"/>
</dbReference>
<dbReference type="SUPFAM" id="SSF52151">
    <property type="entry name" value="FabD/lysophospholipase-like"/>
    <property type="match status" value="1"/>
</dbReference>
<dbReference type="SUPFAM" id="SSF50129">
    <property type="entry name" value="GroES-like"/>
    <property type="match status" value="1"/>
</dbReference>
<dbReference type="SUPFAM" id="SSF51735">
    <property type="entry name" value="NAD(P)-binding Rossmann-fold domains"/>
    <property type="match status" value="2"/>
</dbReference>
<dbReference type="SUPFAM" id="SSF55048">
    <property type="entry name" value="Probable ACP-binding domain of malonyl-CoA ACP transacylase"/>
    <property type="match status" value="1"/>
</dbReference>
<dbReference type="SUPFAM" id="SSF53335">
    <property type="entry name" value="S-adenosyl-L-methionine-dependent methyltransferases"/>
    <property type="match status" value="1"/>
</dbReference>
<dbReference type="SUPFAM" id="SSF53901">
    <property type="entry name" value="Thiolase-like"/>
    <property type="match status" value="1"/>
</dbReference>
<dbReference type="PROSITE" id="PS50075">
    <property type="entry name" value="CARRIER"/>
    <property type="match status" value="1"/>
</dbReference>
<dbReference type="PROSITE" id="PS00606">
    <property type="entry name" value="KS3_1"/>
    <property type="match status" value="1"/>
</dbReference>
<dbReference type="PROSITE" id="PS52004">
    <property type="entry name" value="KS3_2"/>
    <property type="match status" value="1"/>
</dbReference>
<dbReference type="PROSITE" id="PS00012">
    <property type="entry name" value="PHOSPHOPANTETHEINE"/>
    <property type="match status" value="1"/>
</dbReference>
<dbReference type="PROSITE" id="PS52019">
    <property type="entry name" value="PKS_MFAS_DH"/>
    <property type="match status" value="1"/>
</dbReference>